<accession>Q2FJG0</accession>
<keyword id="KW-0067">ATP-binding</keyword>
<keyword id="KW-0418">Kinase</keyword>
<keyword id="KW-0545">Nucleotide biosynthesis</keyword>
<keyword id="KW-0547">Nucleotide-binding</keyword>
<keyword id="KW-0808">Transferase</keyword>
<organism>
    <name type="scientific">Staphylococcus aureus (strain USA300)</name>
    <dbReference type="NCBI Taxonomy" id="367830"/>
    <lineage>
        <taxon>Bacteria</taxon>
        <taxon>Bacillati</taxon>
        <taxon>Bacillota</taxon>
        <taxon>Bacilli</taxon>
        <taxon>Bacillales</taxon>
        <taxon>Staphylococcaceae</taxon>
        <taxon>Staphylococcus</taxon>
    </lineage>
</organism>
<reference key="1">
    <citation type="journal article" date="2006" name="Lancet">
        <title>Complete genome sequence of USA300, an epidemic clone of community-acquired meticillin-resistant Staphylococcus aureus.</title>
        <authorList>
            <person name="Diep B.A."/>
            <person name="Gill S.R."/>
            <person name="Chang R.F."/>
            <person name="Phan T.H."/>
            <person name="Chen J.H."/>
            <person name="Davidson M.G."/>
            <person name="Lin F."/>
            <person name="Lin J."/>
            <person name="Carleton H.A."/>
            <person name="Mongodin E.F."/>
            <person name="Sensabaugh G.F."/>
            <person name="Perdreau-Remington F."/>
        </authorList>
    </citation>
    <scope>NUCLEOTIDE SEQUENCE [LARGE SCALE GENOMIC DNA]</scope>
    <source>
        <strain>USA300</strain>
    </source>
</reference>
<evidence type="ECO:0000255" key="1">
    <source>
        <dbReference type="HAMAP-Rule" id="MF_00165"/>
    </source>
</evidence>
<name>KTHY_STAA3</name>
<feature type="chain" id="PRO_1000023287" description="Thymidylate kinase">
    <location>
        <begin position="1"/>
        <end position="205"/>
    </location>
</feature>
<feature type="binding site" evidence="1">
    <location>
        <begin position="9"/>
        <end position="16"/>
    </location>
    <ligand>
        <name>ATP</name>
        <dbReference type="ChEBI" id="CHEBI:30616"/>
    </ligand>
</feature>
<gene>
    <name evidence="1" type="primary">tmk</name>
    <name type="ordered locus">SAUSA300_0459</name>
</gene>
<dbReference type="EC" id="2.7.4.9" evidence="1"/>
<dbReference type="EMBL" id="CP000255">
    <property type="protein sequence ID" value="ABD22837.1"/>
    <property type="molecule type" value="Genomic_DNA"/>
</dbReference>
<dbReference type="RefSeq" id="WP_001272126.1">
    <property type="nucleotide sequence ID" value="NZ_CP027476.1"/>
</dbReference>
<dbReference type="SMR" id="Q2FJG0"/>
<dbReference type="GeneID" id="98344796"/>
<dbReference type="KEGG" id="saa:SAUSA300_0459"/>
<dbReference type="HOGENOM" id="CLU_049131_0_2_9"/>
<dbReference type="Proteomes" id="UP000001939">
    <property type="component" value="Chromosome"/>
</dbReference>
<dbReference type="GO" id="GO:0005829">
    <property type="term" value="C:cytosol"/>
    <property type="evidence" value="ECO:0007669"/>
    <property type="project" value="TreeGrafter"/>
</dbReference>
<dbReference type="GO" id="GO:0005524">
    <property type="term" value="F:ATP binding"/>
    <property type="evidence" value="ECO:0007669"/>
    <property type="project" value="UniProtKB-UniRule"/>
</dbReference>
<dbReference type="GO" id="GO:0004798">
    <property type="term" value="F:dTMP kinase activity"/>
    <property type="evidence" value="ECO:0007669"/>
    <property type="project" value="UniProtKB-UniRule"/>
</dbReference>
<dbReference type="GO" id="GO:0006233">
    <property type="term" value="P:dTDP biosynthetic process"/>
    <property type="evidence" value="ECO:0007669"/>
    <property type="project" value="InterPro"/>
</dbReference>
<dbReference type="GO" id="GO:0006235">
    <property type="term" value="P:dTTP biosynthetic process"/>
    <property type="evidence" value="ECO:0007669"/>
    <property type="project" value="UniProtKB-UniRule"/>
</dbReference>
<dbReference type="GO" id="GO:0006227">
    <property type="term" value="P:dUDP biosynthetic process"/>
    <property type="evidence" value="ECO:0007669"/>
    <property type="project" value="TreeGrafter"/>
</dbReference>
<dbReference type="CDD" id="cd01672">
    <property type="entry name" value="TMPK"/>
    <property type="match status" value="1"/>
</dbReference>
<dbReference type="FunFam" id="3.40.50.300:FF:000225">
    <property type="entry name" value="Thymidylate kinase"/>
    <property type="match status" value="1"/>
</dbReference>
<dbReference type="Gene3D" id="3.40.50.300">
    <property type="entry name" value="P-loop containing nucleotide triphosphate hydrolases"/>
    <property type="match status" value="1"/>
</dbReference>
<dbReference type="HAMAP" id="MF_00165">
    <property type="entry name" value="Thymidylate_kinase"/>
    <property type="match status" value="1"/>
</dbReference>
<dbReference type="InterPro" id="IPR027417">
    <property type="entry name" value="P-loop_NTPase"/>
</dbReference>
<dbReference type="InterPro" id="IPR039430">
    <property type="entry name" value="Thymidylate_kin-like_dom"/>
</dbReference>
<dbReference type="InterPro" id="IPR018095">
    <property type="entry name" value="Thymidylate_kin_CS"/>
</dbReference>
<dbReference type="InterPro" id="IPR018094">
    <property type="entry name" value="Thymidylate_kinase"/>
</dbReference>
<dbReference type="NCBIfam" id="TIGR00041">
    <property type="entry name" value="DTMP_kinase"/>
    <property type="match status" value="1"/>
</dbReference>
<dbReference type="PANTHER" id="PTHR10344">
    <property type="entry name" value="THYMIDYLATE KINASE"/>
    <property type="match status" value="1"/>
</dbReference>
<dbReference type="PANTHER" id="PTHR10344:SF4">
    <property type="entry name" value="UMP-CMP KINASE 2, MITOCHONDRIAL"/>
    <property type="match status" value="1"/>
</dbReference>
<dbReference type="Pfam" id="PF02223">
    <property type="entry name" value="Thymidylate_kin"/>
    <property type="match status" value="1"/>
</dbReference>
<dbReference type="SUPFAM" id="SSF52540">
    <property type="entry name" value="P-loop containing nucleoside triphosphate hydrolases"/>
    <property type="match status" value="1"/>
</dbReference>
<dbReference type="PROSITE" id="PS01331">
    <property type="entry name" value="THYMIDYLATE_KINASE"/>
    <property type="match status" value="1"/>
</dbReference>
<comment type="function">
    <text evidence="1">Phosphorylation of dTMP to form dTDP in both de novo and salvage pathways of dTTP synthesis.</text>
</comment>
<comment type="catalytic activity">
    <reaction evidence="1">
        <text>dTMP + ATP = dTDP + ADP</text>
        <dbReference type="Rhea" id="RHEA:13517"/>
        <dbReference type="ChEBI" id="CHEBI:30616"/>
        <dbReference type="ChEBI" id="CHEBI:58369"/>
        <dbReference type="ChEBI" id="CHEBI:63528"/>
        <dbReference type="ChEBI" id="CHEBI:456216"/>
        <dbReference type="EC" id="2.7.4.9"/>
    </reaction>
</comment>
<comment type="similarity">
    <text evidence="1">Belongs to the thymidylate kinase family.</text>
</comment>
<sequence>MSAFITFEGPEGSGKTTVINEVYHRLVKDYDVIMTREPGGVPTGEEIRKIVLEGNDMDIRTEAMLFAASRREHLVLKVIPALKEGKVVLCDRYIDSSLAYQGYARGIGVEEVRALNEFAINGLYPDLTIYLNVSAEVGRERIIKNSRDQNRLDQEDLKFHEKVIEGYQEIIHNESQRFKSVNADQPLENVVEDTYQTIIKYLEKI</sequence>
<protein>
    <recommendedName>
        <fullName evidence="1">Thymidylate kinase</fullName>
        <ecNumber evidence="1">2.7.4.9</ecNumber>
    </recommendedName>
    <alternativeName>
        <fullName evidence="1">dTMP kinase</fullName>
    </alternativeName>
</protein>
<proteinExistence type="inferred from homology"/>